<feature type="chain" id="PRO_0000080982" description="Proto-oncogene vav">
    <location>
        <begin position="1"/>
        <end position="843"/>
    </location>
</feature>
<feature type="domain" description="Calponin-homology (CH)" evidence="4">
    <location>
        <begin position="1"/>
        <end position="119"/>
    </location>
</feature>
<feature type="domain" description="DH" evidence="5">
    <location>
        <begin position="194"/>
        <end position="373"/>
    </location>
</feature>
<feature type="domain" description="PH" evidence="6">
    <location>
        <begin position="402"/>
        <end position="504"/>
    </location>
</feature>
<feature type="domain" description="SH3 1" evidence="8">
    <location>
        <begin position="590"/>
        <end position="658"/>
    </location>
</feature>
<feature type="domain" description="SH2" evidence="7">
    <location>
        <begin position="669"/>
        <end position="763"/>
    </location>
</feature>
<feature type="domain" description="SH3 2" evidence="8">
    <location>
        <begin position="780"/>
        <end position="840"/>
    </location>
</feature>
<feature type="zinc finger region" description="Phorbol-ester/DAG-type" evidence="9">
    <location>
        <begin position="515"/>
        <end position="564"/>
    </location>
</feature>
<feature type="modified residue" description="Phosphotyrosine" evidence="2">
    <location>
        <position position="824"/>
    </location>
</feature>
<feature type="modified residue" description="Phosphotyrosine" evidence="3">
    <location>
        <position position="842"/>
    </location>
</feature>
<organism>
    <name type="scientific">Rattus norvegicus</name>
    <name type="common">Rat</name>
    <dbReference type="NCBI Taxonomy" id="10116"/>
    <lineage>
        <taxon>Eukaryota</taxon>
        <taxon>Metazoa</taxon>
        <taxon>Chordata</taxon>
        <taxon>Craniata</taxon>
        <taxon>Vertebrata</taxon>
        <taxon>Euteleostomi</taxon>
        <taxon>Mammalia</taxon>
        <taxon>Eutheria</taxon>
        <taxon>Euarchontoglires</taxon>
        <taxon>Glires</taxon>
        <taxon>Rodentia</taxon>
        <taxon>Myomorpha</taxon>
        <taxon>Muroidea</taxon>
        <taxon>Muridae</taxon>
        <taxon>Murinae</taxon>
        <taxon>Rattus</taxon>
    </lineage>
</organism>
<gene>
    <name type="primary">Vav1</name>
    <name type="synonym">Vav</name>
</gene>
<reference key="1">
    <citation type="journal article" date="1999" name="J. Immunol.">
        <title>Tyrosine phosphorylation of Vav stimulates IL-6 production in mast cells by a Rac/c-Jun N-terminal kinase-dependent pathway.</title>
        <authorList>
            <person name="Song J.S."/>
            <person name="Haleem-Smith H."/>
            <person name="Arudchandran R."/>
            <person name="Gomez J."/>
            <person name="Scott P.M."/>
            <person name="Mill J.F."/>
            <person name="Tan T.-H."/>
            <person name="Rivera J."/>
        </authorList>
    </citation>
    <scope>NUCLEOTIDE SEQUENCE [MRNA]</scope>
</reference>
<accession>P54100</accession>
<comment type="function">
    <text>Couples tyrosine kinase signals with the activation of the Rho/Rac GTPases, thus leading to cell differentiation and/or proliferation.</text>
</comment>
<comment type="subunit">
    <text evidence="2 3">Interacts with SHB (By similarity). Interacts with APS, DOCK2, GRB2, GRB3, DOCK2, SLA, TEC and ZNF655/VIK. Interacts with SIAH2; without leading to its degradation. Associates with BLNK, PLCG1, GRB2 and NCK1 in a B-cell antigen receptor-dependent fashion. Interacts with CBLB; which inhibits tyrosine phosphorylation and down-regulates activity. May interact with CCPG1. Interacts with CLNK. Interacts with THEMIS2 (By similarity). Interacts with NEK3 and this interaction is prolactin-dependent. Interacts with ITK. Interacts with PTK2B/PYK2 (By similarity). Interacts with HCK. Interacts with PTK2B/PYK2. Interacts (via SH2 domain) with SYK (By similarity). Interacts with ANKRD54. Interacts with CD6 (By similarity). Interacts with LCP2; this interaction plays a role in TCR-mediated cytokine production (By similarity).</text>
</comment>
<comment type="domain">
    <text evidence="1">The DH domain is involved in interaction with CCPG1.</text>
</comment>
<comment type="PTM">
    <text evidence="1">Phosphorylated by FYN. Phosphorylated on tyrosine residues by HCK in response to IFNG and bacterial lipopolysaccharide (LPS) (By similarity).</text>
</comment>
<sequence length="843" mass="97954">MELWRQCTHWLIQCRVLPPSHRVTWEGAQVCELAQALRDGVLLCQLLNNLLPHAINLREVNLRPQMSQFLCLKNIRTFLSTCCEKFGLKRSELFEAFDLFDVQDFGKVIYTLSALSWTPIAQNKGIMPFPTEDSALGDEDIYSGLSDQIDDTAEEDEDLYDCVENEEAEGDEIYEDLMRSESVPTPPKMTEYDKRCCCLREIQQTEEKYTDTLGSIQQHFMKPLQRFLKPQDMETIFVNIEELLSVHTHFLKELKDALSGPGATMLYQVFIKYKERFLVYGRYCSQVESAIKHLDQVATAREDVQMKLEECSQRANNGRFTLRDLLMVPMQRVLKYHLLLQELVKHTQDTTEKENLRLALDAMRDLAQCVNEVKRDNETLRQITNFQLSIENLDQSLANYGRPKIDGELKITSVERRSKTDRYAFLLDKALLICKRRGDSYDLKASVNLHSFQVRDDSSGERDNKKWSHMFLLIEDQGAQGYELFFKTRELKKKWMEQFEMAISNIYPENATANGHDFQMFSFEETTSCKACQMLLRGTFYQGYRCYRCRAPAHKECLGRVPPCGRQDFSGTMKKDKLHRRAQDKKRNELGLPKMEVCQEYYGIPPPPGAFGPFLRLNPGDIVELTKAEAEHTWWEGRNTATNEVGWFPCNRVRPYVHGPPQDLSVHLWYAGPMERAGAEGILTNRSDGTYLVRQRVKDTAEFAISIKYNVEVKHIKIMTSEGLYRITEKKAFRGLPELVEFYQQNSLKDCFKSLDTTLQFPYKEPERRAINKPPVGSTKYFGTAKARYDFCARDRSELSLKEGDIIKILNKKGQQGWWRGEIYGRIGWFPSNYVEEDYSEYC</sequence>
<proteinExistence type="evidence at transcript level"/>
<protein>
    <recommendedName>
        <fullName>Proto-oncogene vav</fullName>
    </recommendedName>
    <alternativeName>
        <fullName>p95</fullName>
    </alternativeName>
</protein>
<evidence type="ECO:0000250" key="1"/>
<evidence type="ECO:0000250" key="2">
    <source>
        <dbReference type="UniProtKB" id="P15498"/>
    </source>
</evidence>
<evidence type="ECO:0000250" key="3">
    <source>
        <dbReference type="UniProtKB" id="P27870"/>
    </source>
</evidence>
<evidence type="ECO:0000255" key="4">
    <source>
        <dbReference type="PROSITE-ProRule" id="PRU00044"/>
    </source>
</evidence>
<evidence type="ECO:0000255" key="5">
    <source>
        <dbReference type="PROSITE-ProRule" id="PRU00062"/>
    </source>
</evidence>
<evidence type="ECO:0000255" key="6">
    <source>
        <dbReference type="PROSITE-ProRule" id="PRU00145"/>
    </source>
</evidence>
<evidence type="ECO:0000255" key="7">
    <source>
        <dbReference type="PROSITE-ProRule" id="PRU00191"/>
    </source>
</evidence>
<evidence type="ECO:0000255" key="8">
    <source>
        <dbReference type="PROSITE-ProRule" id="PRU00192"/>
    </source>
</evidence>
<evidence type="ECO:0000255" key="9">
    <source>
        <dbReference type="PROSITE-ProRule" id="PRU00226"/>
    </source>
</evidence>
<dbReference type="EMBL" id="U39476">
    <property type="protein sequence ID" value="AAA98606.1"/>
    <property type="molecule type" value="mRNA"/>
</dbReference>
<dbReference type="SMR" id="P54100"/>
<dbReference type="FunCoup" id="P54100">
    <property type="interactions" value="1255"/>
</dbReference>
<dbReference type="IntAct" id="P54100">
    <property type="interactions" value="3"/>
</dbReference>
<dbReference type="STRING" id="10116.ENSRNOP00000064264"/>
<dbReference type="GlyGen" id="P54100">
    <property type="glycosylation" value="1 site"/>
</dbReference>
<dbReference type="PhosphoSitePlus" id="P54100"/>
<dbReference type="PaxDb" id="10116-ENSRNOP00000064264"/>
<dbReference type="AGR" id="RGD:3951"/>
<dbReference type="RGD" id="3951">
    <property type="gene designation" value="Vav1"/>
</dbReference>
<dbReference type="eggNOG" id="KOG2996">
    <property type="taxonomic scope" value="Eukaryota"/>
</dbReference>
<dbReference type="InParanoid" id="P54100"/>
<dbReference type="PhylomeDB" id="P54100"/>
<dbReference type="Reactome" id="R-RNO-114604">
    <property type="pathway name" value="GPVI-mediated activation cascade"/>
</dbReference>
<dbReference type="Reactome" id="R-RNO-1257604">
    <property type="pathway name" value="PIP3 activates AKT signaling"/>
</dbReference>
<dbReference type="Reactome" id="R-RNO-1433557">
    <property type="pathway name" value="Signaling by SCF-KIT"/>
</dbReference>
<dbReference type="Reactome" id="R-RNO-193648">
    <property type="pathway name" value="NRAGE signals death through JNK"/>
</dbReference>
<dbReference type="Reactome" id="R-RNO-2029482">
    <property type="pathway name" value="Regulation of actin dynamics for phagocytic cup formation"/>
</dbReference>
<dbReference type="Reactome" id="R-RNO-2871796">
    <property type="pathway name" value="FCERI mediated MAPK activation"/>
</dbReference>
<dbReference type="Reactome" id="R-RNO-2871809">
    <property type="pathway name" value="FCERI mediated Ca+2 mobilization"/>
</dbReference>
<dbReference type="Reactome" id="R-RNO-389359">
    <property type="pathway name" value="CD28 dependent Vav1 pathway"/>
</dbReference>
<dbReference type="Reactome" id="R-RNO-416482">
    <property type="pathway name" value="G alpha (12/13) signalling events"/>
</dbReference>
<dbReference type="Reactome" id="R-RNO-4420097">
    <property type="pathway name" value="VEGFA-VEGFR2 Pathway"/>
</dbReference>
<dbReference type="Reactome" id="R-RNO-512988">
    <property type="pathway name" value="Interleukin-3, Interleukin-5 and GM-CSF signaling"/>
</dbReference>
<dbReference type="Reactome" id="R-RNO-5218920">
    <property type="pathway name" value="VEGFR2 mediated vascular permeability"/>
</dbReference>
<dbReference type="Reactome" id="R-RNO-6811558">
    <property type="pathway name" value="PI5P, PP2A and IER3 Regulate PI3K/AKT Signaling"/>
</dbReference>
<dbReference type="Reactome" id="R-RNO-8980692">
    <property type="pathway name" value="RHOA GTPase cycle"/>
</dbReference>
<dbReference type="Reactome" id="R-RNO-9013149">
    <property type="pathway name" value="RAC1 GTPase cycle"/>
</dbReference>
<dbReference type="Reactome" id="R-RNO-9013404">
    <property type="pathway name" value="RAC2 GTPase cycle"/>
</dbReference>
<dbReference type="Reactome" id="R-RNO-9013408">
    <property type="pathway name" value="RHOG GTPase cycle"/>
</dbReference>
<dbReference type="Reactome" id="R-RNO-9027284">
    <property type="pathway name" value="Erythropoietin activates RAS"/>
</dbReference>
<dbReference type="Reactome" id="R-RNO-912631">
    <property type="pathway name" value="Regulation of signaling by CBL"/>
</dbReference>
<dbReference type="Reactome" id="R-RNO-9748787">
    <property type="pathway name" value="Azathioprine ADME"/>
</dbReference>
<dbReference type="Reactome" id="R-RNO-983695">
    <property type="pathway name" value="Antigen activates B Cell Receptor (BCR) leading to generation of second messengers"/>
</dbReference>
<dbReference type="PRO" id="PR:P54100"/>
<dbReference type="Proteomes" id="UP000002494">
    <property type="component" value="Unplaced"/>
</dbReference>
<dbReference type="GO" id="GO:0005911">
    <property type="term" value="C:cell-cell junction"/>
    <property type="evidence" value="ECO:0000266"/>
    <property type="project" value="RGD"/>
</dbReference>
<dbReference type="GO" id="GO:0005737">
    <property type="term" value="C:cytoplasm"/>
    <property type="evidence" value="ECO:0000266"/>
    <property type="project" value="RGD"/>
</dbReference>
<dbReference type="GO" id="GO:0005085">
    <property type="term" value="F:guanyl-nucleotide exchange factor activity"/>
    <property type="evidence" value="ECO:0000266"/>
    <property type="project" value="RGD"/>
</dbReference>
<dbReference type="GO" id="GO:0140031">
    <property type="term" value="F:phosphorylation-dependent protein binding"/>
    <property type="evidence" value="ECO:0000266"/>
    <property type="project" value="RGD"/>
</dbReference>
<dbReference type="GO" id="GO:0001784">
    <property type="term" value="F:phosphotyrosine residue binding"/>
    <property type="evidence" value="ECO:0000266"/>
    <property type="project" value="RGD"/>
</dbReference>
<dbReference type="GO" id="GO:0008270">
    <property type="term" value="F:zinc ion binding"/>
    <property type="evidence" value="ECO:0007669"/>
    <property type="project" value="UniProtKB-KW"/>
</dbReference>
<dbReference type="GO" id="GO:0048468">
    <property type="term" value="P:cell development"/>
    <property type="evidence" value="ECO:0000304"/>
    <property type="project" value="RGD"/>
</dbReference>
<dbReference type="GO" id="GO:0016477">
    <property type="term" value="P:cell migration"/>
    <property type="evidence" value="ECO:0000318"/>
    <property type="project" value="GO_Central"/>
</dbReference>
<dbReference type="GO" id="GO:0007186">
    <property type="term" value="P:G protein-coupled receptor signaling pathway"/>
    <property type="evidence" value="ECO:0000266"/>
    <property type="project" value="RGD"/>
</dbReference>
<dbReference type="GO" id="GO:0006955">
    <property type="term" value="P:immune response"/>
    <property type="evidence" value="ECO:0000266"/>
    <property type="project" value="RGD"/>
</dbReference>
<dbReference type="GO" id="GO:0002768">
    <property type="term" value="P:immune response-regulating cell surface receptor signaling pathway"/>
    <property type="evidence" value="ECO:0000270"/>
    <property type="project" value="RGD"/>
</dbReference>
<dbReference type="GO" id="GO:0007229">
    <property type="term" value="P:integrin-mediated signaling pathway"/>
    <property type="evidence" value="ECO:0000266"/>
    <property type="project" value="RGD"/>
</dbReference>
<dbReference type="GO" id="GO:0035556">
    <property type="term" value="P:intracellular signal transduction"/>
    <property type="evidence" value="ECO:0000266"/>
    <property type="project" value="RGD"/>
</dbReference>
<dbReference type="GO" id="GO:0030101">
    <property type="term" value="P:natural killer cell activation"/>
    <property type="evidence" value="ECO:0000266"/>
    <property type="project" value="RGD"/>
</dbReference>
<dbReference type="GO" id="GO:0042267">
    <property type="term" value="P:natural killer cell mediated cytotoxicity"/>
    <property type="evidence" value="ECO:0000266"/>
    <property type="project" value="RGD"/>
</dbReference>
<dbReference type="GO" id="GO:0030593">
    <property type="term" value="P:neutrophil chemotaxis"/>
    <property type="evidence" value="ECO:0000266"/>
    <property type="project" value="RGD"/>
</dbReference>
<dbReference type="GO" id="GO:0006909">
    <property type="term" value="P:phagocytosis"/>
    <property type="evidence" value="ECO:0000266"/>
    <property type="project" value="RGD"/>
</dbReference>
<dbReference type="GO" id="GO:0045785">
    <property type="term" value="P:positive regulation of cell adhesion"/>
    <property type="evidence" value="ECO:0000266"/>
    <property type="project" value="RGD"/>
</dbReference>
<dbReference type="GO" id="GO:0045954">
    <property type="term" value="P:positive regulation of natural killer cell mediated cytotoxicity"/>
    <property type="evidence" value="ECO:0000266"/>
    <property type="project" value="RGD"/>
</dbReference>
<dbReference type="GO" id="GO:0051897">
    <property type="term" value="P:positive regulation of phosphatidylinositol 3-kinase/protein kinase B signal transduction"/>
    <property type="evidence" value="ECO:0000318"/>
    <property type="project" value="GO_Central"/>
</dbReference>
<dbReference type="GO" id="GO:0072593">
    <property type="term" value="P:reactive oxygen species metabolic process"/>
    <property type="evidence" value="ECO:0000266"/>
    <property type="project" value="RGD"/>
</dbReference>
<dbReference type="GO" id="GO:0008361">
    <property type="term" value="P:regulation of cell size"/>
    <property type="evidence" value="ECO:0000266"/>
    <property type="project" value="RGD"/>
</dbReference>
<dbReference type="GO" id="GO:0007264">
    <property type="term" value="P:small GTPase-mediated signal transduction"/>
    <property type="evidence" value="ECO:0000318"/>
    <property type="project" value="GO_Central"/>
</dbReference>
<dbReference type="GO" id="GO:0042110">
    <property type="term" value="P:T cell activation"/>
    <property type="evidence" value="ECO:0000266"/>
    <property type="project" value="RGD"/>
</dbReference>
<dbReference type="GO" id="GO:0031295">
    <property type="term" value="P:T cell costimulation"/>
    <property type="evidence" value="ECO:0000266"/>
    <property type="project" value="RGD"/>
</dbReference>
<dbReference type="GO" id="GO:0030217">
    <property type="term" value="P:T cell differentiation"/>
    <property type="evidence" value="ECO:0000266"/>
    <property type="project" value="RGD"/>
</dbReference>
<dbReference type="CDD" id="cd20867">
    <property type="entry name" value="C1_VAV1"/>
    <property type="match status" value="1"/>
</dbReference>
<dbReference type="CDD" id="cd21262">
    <property type="entry name" value="CH_VAV1"/>
    <property type="match status" value="1"/>
</dbReference>
<dbReference type="CDD" id="cd01223">
    <property type="entry name" value="PH_Vav"/>
    <property type="match status" value="1"/>
</dbReference>
<dbReference type="CDD" id="cd00160">
    <property type="entry name" value="RhoGEF"/>
    <property type="match status" value="1"/>
</dbReference>
<dbReference type="CDD" id="cd10405">
    <property type="entry name" value="SH2_Vav1"/>
    <property type="match status" value="1"/>
</dbReference>
<dbReference type="CDD" id="cd11979">
    <property type="entry name" value="SH3_VAV1_1"/>
    <property type="match status" value="1"/>
</dbReference>
<dbReference type="CDD" id="cd11976">
    <property type="entry name" value="SH3_VAV1_2"/>
    <property type="match status" value="1"/>
</dbReference>
<dbReference type="FunFam" id="1.20.900.10:FF:000009">
    <property type="entry name" value="Vav guanine nucleotide exchange factor 1"/>
    <property type="match status" value="1"/>
</dbReference>
<dbReference type="FunFam" id="3.30.60.20:FF:000015">
    <property type="entry name" value="Vav guanine nucleotide exchange factor 1"/>
    <property type="match status" value="1"/>
</dbReference>
<dbReference type="FunFam" id="1.10.418.10:FF:000019">
    <property type="entry name" value="Vav guanine nucleotide exchange factor 2"/>
    <property type="match status" value="1"/>
</dbReference>
<dbReference type="FunFam" id="2.30.29.30:FF:000050">
    <property type="entry name" value="Vav guanine nucleotide exchange factor 2"/>
    <property type="match status" value="1"/>
</dbReference>
<dbReference type="FunFam" id="3.30.505.10:FF:000024">
    <property type="entry name" value="Vav guanine nucleotide exchange factor 2"/>
    <property type="match status" value="1"/>
</dbReference>
<dbReference type="FunFam" id="2.30.30.40:FF:000039">
    <property type="entry name" value="Vav guanine nucleotide exchange factor 3"/>
    <property type="match status" value="1"/>
</dbReference>
<dbReference type="FunFam" id="2.30.30.40:FF:000108">
    <property type="entry name" value="Vav guanine nucleotide exchange factor 3"/>
    <property type="match status" value="1"/>
</dbReference>
<dbReference type="Gene3D" id="3.30.60.20">
    <property type="match status" value="1"/>
</dbReference>
<dbReference type="Gene3D" id="1.10.418.10">
    <property type="entry name" value="Calponin-like domain"/>
    <property type="match status" value="1"/>
</dbReference>
<dbReference type="Gene3D" id="1.20.900.10">
    <property type="entry name" value="Dbl homology (DH) domain"/>
    <property type="match status" value="1"/>
</dbReference>
<dbReference type="Gene3D" id="2.30.29.30">
    <property type="entry name" value="Pleckstrin-homology domain (PH domain)/Phosphotyrosine-binding domain (PTB)"/>
    <property type="match status" value="1"/>
</dbReference>
<dbReference type="Gene3D" id="3.30.505.10">
    <property type="entry name" value="SH2 domain"/>
    <property type="match status" value="1"/>
</dbReference>
<dbReference type="Gene3D" id="2.30.30.40">
    <property type="entry name" value="SH3 Domains"/>
    <property type="match status" value="2"/>
</dbReference>
<dbReference type="InterPro" id="IPR022613">
    <property type="entry name" value="CAMSAP-like_CH_dom"/>
</dbReference>
<dbReference type="InterPro" id="IPR001715">
    <property type="entry name" value="CH_dom"/>
</dbReference>
<dbReference type="InterPro" id="IPR036872">
    <property type="entry name" value="CH_dom_sf"/>
</dbReference>
<dbReference type="InterPro" id="IPR035899">
    <property type="entry name" value="DBL_dom_sf"/>
</dbReference>
<dbReference type="InterPro" id="IPR000219">
    <property type="entry name" value="DH_dom"/>
</dbReference>
<dbReference type="InterPro" id="IPR001331">
    <property type="entry name" value="GDS_CDC24_CS"/>
</dbReference>
<dbReference type="InterPro" id="IPR002219">
    <property type="entry name" value="PE/DAG-bd"/>
</dbReference>
<dbReference type="InterPro" id="IPR011993">
    <property type="entry name" value="PH-like_dom_sf"/>
</dbReference>
<dbReference type="InterPro" id="IPR001849">
    <property type="entry name" value="PH_domain"/>
</dbReference>
<dbReference type="InterPro" id="IPR037832">
    <property type="entry name" value="PH_Vav"/>
</dbReference>
<dbReference type="InterPro" id="IPR000980">
    <property type="entry name" value="SH2"/>
</dbReference>
<dbReference type="InterPro" id="IPR036860">
    <property type="entry name" value="SH2_dom_sf"/>
</dbReference>
<dbReference type="InterPro" id="IPR036028">
    <property type="entry name" value="SH3-like_dom_sf"/>
</dbReference>
<dbReference type="InterPro" id="IPR001452">
    <property type="entry name" value="SH3_domain"/>
</dbReference>
<dbReference type="InterPro" id="IPR003096">
    <property type="entry name" value="SM22_calponin"/>
</dbReference>
<dbReference type="InterPro" id="IPR035879">
    <property type="entry name" value="VAV1_SH2"/>
</dbReference>
<dbReference type="InterPro" id="IPR035730">
    <property type="entry name" value="VAV1_SH3_1"/>
</dbReference>
<dbReference type="InterPro" id="IPR035729">
    <property type="entry name" value="VAV1_SH3_2"/>
</dbReference>
<dbReference type="PANTHER" id="PTHR45818">
    <property type="entry name" value="PROTEIN VAV"/>
    <property type="match status" value="1"/>
</dbReference>
<dbReference type="PANTHER" id="PTHR45818:SF2">
    <property type="entry name" value="PROTO-ONCOGENE VAV"/>
    <property type="match status" value="1"/>
</dbReference>
<dbReference type="Pfam" id="PF00130">
    <property type="entry name" value="C1_1"/>
    <property type="match status" value="1"/>
</dbReference>
<dbReference type="Pfam" id="PF11971">
    <property type="entry name" value="CAMSAP_CH"/>
    <property type="match status" value="1"/>
</dbReference>
<dbReference type="Pfam" id="PF00169">
    <property type="entry name" value="PH"/>
    <property type="match status" value="1"/>
</dbReference>
<dbReference type="Pfam" id="PF00621">
    <property type="entry name" value="RhoGEF"/>
    <property type="match status" value="1"/>
</dbReference>
<dbReference type="Pfam" id="PF00017">
    <property type="entry name" value="SH2"/>
    <property type="match status" value="1"/>
</dbReference>
<dbReference type="Pfam" id="PF00018">
    <property type="entry name" value="SH3_1"/>
    <property type="match status" value="1"/>
</dbReference>
<dbReference type="Pfam" id="PF07653">
    <property type="entry name" value="SH3_2"/>
    <property type="match status" value="1"/>
</dbReference>
<dbReference type="PRINTS" id="PR00401">
    <property type="entry name" value="SH2DOMAIN"/>
</dbReference>
<dbReference type="PRINTS" id="PR00452">
    <property type="entry name" value="SH3DOMAIN"/>
</dbReference>
<dbReference type="PRINTS" id="PR00888">
    <property type="entry name" value="SM22CALPONIN"/>
</dbReference>
<dbReference type="SMART" id="SM00109">
    <property type="entry name" value="C1"/>
    <property type="match status" value="1"/>
</dbReference>
<dbReference type="SMART" id="SM00033">
    <property type="entry name" value="CH"/>
    <property type="match status" value="1"/>
</dbReference>
<dbReference type="SMART" id="SM00233">
    <property type="entry name" value="PH"/>
    <property type="match status" value="1"/>
</dbReference>
<dbReference type="SMART" id="SM00325">
    <property type="entry name" value="RhoGEF"/>
    <property type="match status" value="1"/>
</dbReference>
<dbReference type="SMART" id="SM00252">
    <property type="entry name" value="SH2"/>
    <property type="match status" value="1"/>
</dbReference>
<dbReference type="SMART" id="SM00326">
    <property type="entry name" value="SH3"/>
    <property type="match status" value="2"/>
</dbReference>
<dbReference type="SUPFAM" id="SSF47576">
    <property type="entry name" value="Calponin-homology domain, CH-domain"/>
    <property type="match status" value="1"/>
</dbReference>
<dbReference type="SUPFAM" id="SSF48065">
    <property type="entry name" value="DBL homology domain (DH-domain)"/>
    <property type="match status" value="1"/>
</dbReference>
<dbReference type="SUPFAM" id="SSF50729">
    <property type="entry name" value="PH domain-like"/>
    <property type="match status" value="1"/>
</dbReference>
<dbReference type="SUPFAM" id="SSF55550">
    <property type="entry name" value="SH2 domain"/>
    <property type="match status" value="1"/>
</dbReference>
<dbReference type="SUPFAM" id="SSF50044">
    <property type="entry name" value="SH3-domain"/>
    <property type="match status" value="1"/>
</dbReference>
<dbReference type="PROSITE" id="PS50021">
    <property type="entry name" value="CH"/>
    <property type="match status" value="1"/>
</dbReference>
<dbReference type="PROSITE" id="PS00741">
    <property type="entry name" value="DH_1"/>
    <property type="match status" value="1"/>
</dbReference>
<dbReference type="PROSITE" id="PS50010">
    <property type="entry name" value="DH_2"/>
    <property type="match status" value="1"/>
</dbReference>
<dbReference type="PROSITE" id="PS50003">
    <property type="entry name" value="PH_DOMAIN"/>
    <property type="match status" value="1"/>
</dbReference>
<dbReference type="PROSITE" id="PS50001">
    <property type="entry name" value="SH2"/>
    <property type="match status" value="1"/>
</dbReference>
<dbReference type="PROSITE" id="PS50002">
    <property type="entry name" value="SH3"/>
    <property type="match status" value="2"/>
</dbReference>
<dbReference type="PROSITE" id="PS00479">
    <property type="entry name" value="ZF_DAG_PE_1"/>
    <property type="match status" value="1"/>
</dbReference>
<dbReference type="PROSITE" id="PS50081">
    <property type="entry name" value="ZF_DAG_PE_2"/>
    <property type="match status" value="1"/>
</dbReference>
<name>VAV_RAT</name>
<keyword id="KW-0344">Guanine-nucleotide releasing factor</keyword>
<keyword id="KW-0479">Metal-binding</keyword>
<keyword id="KW-0597">Phosphoprotein</keyword>
<keyword id="KW-0656">Proto-oncogene</keyword>
<keyword id="KW-1185">Reference proteome</keyword>
<keyword id="KW-0677">Repeat</keyword>
<keyword id="KW-0727">SH2 domain</keyword>
<keyword id="KW-0728">SH3 domain</keyword>
<keyword id="KW-0862">Zinc</keyword>
<keyword id="KW-0863">Zinc-finger</keyword>